<sequence>MADFQSIAQQFVTFYYQTFDGNRAGLAPLYRDHSMLTFETSAIQGVAGIIEKLTSLPFQKVQHQVSTLDAQPSGEHGGILVLVTGALLVDEEKNPMNYTQTFQLMPDGAGSYFVLNDVFRLIYNA</sequence>
<accession>Q96VN3</accession>
<accession>C8V931</accession>
<accession>Q5B3D8</accession>
<organism>
    <name type="scientific">Emericella nidulans (strain FGSC A4 / ATCC 38163 / CBS 112.46 / NRRL 194 / M139)</name>
    <name type="common">Aspergillus nidulans</name>
    <dbReference type="NCBI Taxonomy" id="227321"/>
    <lineage>
        <taxon>Eukaryota</taxon>
        <taxon>Fungi</taxon>
        <taxon>Dikarya</taxon>
        <taxon>Ascomycota</taxon>
        <taxon>Pezizomycotina</taxon>
        <taxon>Eurotiomycetes</taxon>
        <taxon>Eurotiomycetidae</taxon>
        <taxon>Eurotiales</taxon>
        <taxon>Aspergillaceae</taxon>
        <taxon>Aspergillus</taxon>
        <taxon>Aspergillus subgen. Nidulantes</taxon>
    </lineage>
</organism>
<feature type="chain" id="PRO_0000194787" description="Nuclear transport factor 2">
    <location>
        <begin position="1"/>
        <end position="125"/>
    </location>
</feature>
<feature type="domain" description="NTF2" evidence="2">
    <location>
        <begin position="7"/>
        <end position="121"/>
    </location>
</feature>
<evidence type="ECO:0000250" key="1"/>
<evidence type="ECO:0000255" key="2">
    <source>
        <dbReference type="PROSITE-ProRule" id="PRU00137"/>
    </source>
</evidence>
<dbReference type="EMBL" id="AY038983">
    <property type="protein sequence ID" value="AAK71467.1"/>
    <property type="molecule type" value="Genomic_DNA"/>
</dbReference>
<dbReference type="EMBL" id="AACD01000084">
    <property type="protein sequence ID" value="EAA61020.1"/>
    <property type="molecule type" value="Genomic_DNA"/>
</dbReference>
<dbReference type="EMBL" id="BN001303">
    <property type="protein sequence ID" value="CBF76429.1"/>
    <property type="molecule type" value="Genomic_DNA"/>
</dbReference>
<dbReference type="RefSeq" id="XP_662546.1">
    <property type="nucleotide sequence ID" value="XM_657454.1"/>
</dbReference>
<dbReference type="SMR" id="Q96VN3"/>
<dbReference type="FunCoup" id="Q96VN3">
    <property type="interactions" value="1161"/>
</dbReference>
<dbReference type="STRING" id="227321.Q96VN3"/>
<dbReference type="EnsemblFungi" id="CBF76429">
    <property type="protein sequence ID" value="CBF76429"/>
    <property type="gene ID" value="ANIA_04942"/>
</dbReference>
<dbReference type="KEGG" id="ani:ANIA_04942"/>
<dbReference type="VEuPathDB" id="FungiDB:AN4942"/>
<dbReference type="eggNOG" id="KOG2104">
    <property type="taxonomic scope" value="Eukaryota"/>
</dbReference>
<dbReference type="HOGENOM" id="CLU_131642_0_0_1"/>
<dbReference type="InParanoid" id="Q96VN3"/>
<dbReference type="OMA" id="QFVEYYY"/>
<dbReference type="OrthoDB" id="6507044at2759"/>
<dbReference type="Proteomes" id="UP000000560">
    <property type="component" value="Chromosome III"/>
</dbReference>
<dbReference type="GO" id="GO:0005737">
    <property type="term" value="C:cytoplasm"/>
    <property type="evidence" value="ECO:0007669"/>
    <property type="project" value="UniProtKB-SubCell"/>
</dbReference>
<dbReference type="GO" id="GO:0044613">
    <property type="term" value="C:nuclear pore central transport channel"/>
    <property type="evidence" value="ECO:0000318"/>
    <property type="project" value="GO_Central"/>
</dbReference>
<dbReference type="GO" id="GO:0061608">
    <property type="term" value="F:nuclear import signal receptor activity"/>
    <property type="evidence" value="ECO:0000318"/>
    <property type="project" value="GO_Central"/>
</dbReference>
<dbReference type="GO" id="GO:0006606">
    <property type="term" value="P:protein import into nucleus"/>
    <property type="evidence" value="ECO:0000318"/>
    <property type="project" value="GO_Central"/>
</dbReference>
<dbReference type="CDD" id="cd00780">
    <property type="entry name" value="NTF2"/>
    <property type="match status" value="1"/>
</dbReference>
<dbReference type="FunFam" id="3.10.450.50:FF:000005">
    <property type="entry name" value="Nuclear transport factor 2"/>
    <property type="match status" value="1"/>
</dbReference>
<dbReference type="Gene3D" id="3.10.450.50">
    <property type="match status" value="1"/>
</dbReference>
<dbReference type="InterPro" id="IPR045875">
    <property type="entry name" value="NTF2"/>
</dbReference>
<dbReference type="InterPro" id="IPR032710">
    <property type="entry name" value="NTF2-like_dom_sf"/>
</dbReference>
<dbReference type="InterPro" id="IPR002075">
    <property type="entry name" value="NTF2_dom"/>
</dbReference>
<dbReference type="InterPro" id="IPR018222">
    <property type="entry name" value="Nuclear_transport_factor_2_euk"/>
</dbReference>
<dbReference type="PANTHER" id="PTHR12612">
    <property type="entry name" value="NUCLEAR TRANSPORT FACTOR 2"/>
    <property type="match status" value="1"/>
</dbReference>
<dbReference type="Pfam" id="PF02136">
    <property type="entry name" value="NTF2"/>
    <property type="match status" value="1"/>
</dbReference>
<dbReference type="SUPFAM" id="SSF54427">
    <property type="entry name" value="NTF2-like"/>
    <property type="match status" value="1"/>
</dbReference>
<dbReference type="PROSITE" id="PS50177">
    <property type="entry name" value="NTF2_DOMAIN"/>
    <property type="match status" value="1"/>
</dbReference>
<keyword id="KW-0963">Cytoplasm</keyword>
<keyword id="KW-0653">Protein transport</keyword>
<keyword id="KW-1185">Reference proteome</keyword>
<keyword id="KW-0813">Transport</keyword>
<proteinExistence type="inferred from homology"/>
<comment type="function">
    <text evidence="1">Facilitates protein transport into the nucleus. Could be part of a multicomponent system of cytosolic factors that assemble at the pore complex during nuclear import (By similarity).</text>
</comment>
<comment type="subcellular location">
    <subcellularLocation>
        <location evidence="1">Cytoplasm</location>
    </subcellularLocation>
</comment>
<gene>
    <name type="primary">ntf2</name>
    <name type="ORF">AN4942</name>
</gene>
<protein>
    <recommendedName>
        <fullName>Nuclear transport factor 2</fullName>
        <shortName>NTF-2</shortName>
    </recommendedName>
</protein>
<name>NTF2_EMENI</name>
<reference key="1">
    <citation type="submission" date="2001-06" db="EMBL/GenBank/DDBJ databases">
        <title>Nuclear transport factor 2 from Aspergillus nidulans.</title>
        <authorList>
            <person name="Espeso E.A."/>
            <person name="Penalva M.A."/>
        </authorList>
    </citation>
    <scope>NUCLEOTIDE SEQUENCE [GENOMIC DNA]</scope>
</reference>
<reference key="2">
    <citation type="journal article" date="2005" name="Nature">
        <title>Sequencing of Aspergillus nidulans and comparative analysis with A. fumigatus and A. oryzae.</title>
        <authorList>
            <person name="Galagan J.E."/>
            <person name="Calvo S.E."/>
            <person name="Cuomo C."/>
            <person name="Ma L.-J."/>
            <person name="Wortman J.R."/>
            <person name="Batzoglou S."/>
            <person name="Lee S.-I."/>
            <person name="Bastuerkmen M."/>
            <person name="Spevak C.C."/>
            <person name="Clutterbuck J."/>
            <person name="Kapitonov V."/>
            <person name="Jurka J."/>
            <person name="Scazzocchio C."/>
            <person name="Farman M.L."/>
            <person name="Butler J."/>
            <person name="Purcell S."/>
            <person name="Harris S."/>
            <person name="Braus G.H."/>
            <person name="Draht O."/>
            <person name="Busch S."/>
            <person name="D'Enfert C."/>
            <person name="Bouchier C."/>
            <person name="Goldman G.H."/>
            <person name="Bell-Pedersen D."/>
            <person name="Griffiths-Jones S."/>
            <person name="Doonan J.H."/>
            <person name="Yu J."/>
            <person name="Vienken K."/>
            <person name="Pain A."/>
            <person name="Freitag M."/>
            <person name="Selker E.U."/>
            <person name="Archer D.B."/>
            <person name="Penalva M.A."/>
            <person name="Oakley B.R."/>
            <person name="Momany M."/>
            <person name="Tanaka T."/>
            <person name="Kumagai T."/>
            <person name="Asai K."/>
            <person name="Machida M."/>
            <person name="Nierman W.C."/>
            <person name="Denning D.W."/>
            <person name="Caddick M.X."/>
            <person name="Hynes M."/>
            <person name="Paoletti M."/>
            <person name="Fischer R."/>
            <person name="Miller B.L."/>
            <person name="Dyer P.S."/>
            <person name="Sachs M.S."/>
            <person name="Osmani S.A."/>
            <person name="Birren B.W."/>
        </authorList>
    </citation>
    <scope>NUCLEOTIDE SEQUENCE [LARGE SCALE GENOMIC DNA]</scope>
    <source>
        <strain>FGSC A4 / ATCC 38163 / CBS 112.46 / NRRL 194 / M139</strain>
    </source>
</reference>
<reference key="3">
    <citation type="journal article" date="2009" name="Fungal Genet. Biol.">
        <title>The 2008 update of the Aspergillus nidulans genome annotation: a community effort.</title>
        <authorList>
            <person name="Wortman J.R."/>
            <person name="Gilsenan J.M."/>
            <person name="Joardar V."/>
            <person name="Deegan J."/>
            <person name="Clutterbuck J."/>
            <person name="Andersen M.R."/>
            <person name="Archer D."/>
            <person name="Bencina M."/>
            <person name="Braus G."/>
            <person name="Coutinho P."/>
            <person name="von Dohren H."/>
            <person name="Doonan J."/>
            <person name="Driessen A.J."/>
            <person name="Durek P."/>
            <person name="Espeso E."/>
            <person name="Fekete E."/>
            <person name="Flipphi M."/>
            <person name="Estrada C.G."/>
            <person name="Geysens S."/>
            <person name="Goldman G."/>
            <person name="de Groot P.W."/>
            <person name="Hansen K."/>
            <person name="Harris S.D."/>
            <person name="Heinekamp T."/>
            <person name="Helmstaedt K."/>
            <person name="Henrissat B."/>
            <person name="Hofmann G."/>
            <person name="Homan T."/>
            <person name="Horio T."/>
            <person name="Horiuchi H."/>
            <person name="James S."/>
            <person name="Jones M."/>
            <person name="Karaffa L."/>
            <person name="Karanyi Z."/>
            <person name="Kato M."/>
            <person name="Keller N."/>
            <person name="Kelly D.E."/>
            <person name="Kiel J.A."/>
            <person name="Kim J.M."/>
            <person name="van der Klei I.J."/>
            <person name="Klis F.M."/>
            <person name="Kovalchuk A."/>
            <person name="Krasevec N."/>
            <person name="Kubicek C.P."/>
            <person name="Liu B."/>
            <person name="Maccabe A."/>
            <person name="Meyer V."/>
            <person name="Mirabito P."/>
            <person name="Miskei M."/>
            <person name="Mos M."/>
            <person name="Mullins J."/>
            <person name="Nelson D.R."/>
            <person name="Nielsen J."/>
            <person name="Oakley B.R."/>
            <person name="Osmani S.A."/>
            <person name="Pakula T."/>
            <person name="Paszewski A."/>
            <person name="Paulsen I."/>
            <person name="Pilsyk S."/>
            <person name="Pocsi I."/>
            <person name="Punt P.J."/>
            <person name="Ram A.F."/>
            <person name="Ren Q."/>
            <person name="Robellet X."/>
            <person name="Robson G."/>
            <person name="Seiboth B."/>
            <person name="van Solingen P."/>
            <person name="Specht T."/>
            <person name="Sun J."/>
            <person name="Taheri-Talesh N."/>
            <person name="Takeshita N."/>
            <person name="Ussery D."/>
            <person name="vanKuyk P.A."/>
            <person name="Visser H."/>
            <person name="van de Vondervoort P.J."/>
            <person name="de Vries R.P."/>
            <person name="Walton J."/>
            <person name="Xiang X."/>
            <person name="Xiong Y."/>
            <person name="Zeng A.P."/>
            <person name="Brandt B.W."/>
            <person name="Cornell M.J."/>
            <person name="van den Hondel C.A."/>
            <person name="Visser J."/>
            <person name="Oliver S.G."/>
            <person name="Turner G."/>
        </authorList>
    </citation>
    <scope>GENOME REANNOTATION</scope>
    <source>
        <strain>FGSC A4 / ATCC 38163 / CBS 112.46 / NRRL 194 / M139</strain>
    </source>
</reference>